<gene>
    <name evidence="1" type="primary">kefB</name>
    <name type="ordered locus">ECUMN_3811</name>
</gene>
<keyword id="KW-0050">Antiport</keyword>
<keyword id="KW-0997">Cell inner membrane</keyword>
<keyword id="KW-1003">Cell membrane</keyword>
<keyword id="KW-0406">Ion transport</keyword>
<keyword id="KW-0472">Membrane</keyword>
<keyword id="KW-0630">Potassium</keyword>
<keyword id="KW-0633">Potassium transport</keyword>
<keyword id="KW-0812">Transmembrane</keyword>
<keyword id="KW-1133">Transmembrane helix</keyword>
<keyword id="KW-0813">Transport</keyword>
<feature type="chain" id="PRO_1000145519" description="Glutathione-regulated potassium-efflux system protein KefB">
    <location>
        <begin position="1"/>
        <end position="601"/>
    </location>
</feature>
<feature type="transmembrane region" description="Helical" evidence="1">
    <location>
        <begin position="4"/>
        <end position="24"/>
    </location>
</feature>
<feature type="transmembrane region" description="Helical" evidence="1">
    <location>
        <begin position="29"/>
        <end position="49"/>
    </location>
</feature>
<feature type="transmembrane region" description="Helical" evidence="1">
    <location>
        <begin position="55"/>
        <end position="75"/>
    </location>
</feature>
<feature type="transmembrane region" description="Helical" evidence="1">
    <location>
        <begin position="87"/>
        <end position="107"/>
    </location>
</feature>
<feature type="transmembrane region" description="Helical" evidence="1">
    <location>
        <begin position="115"/>
        <end position="135"/>
    </location>
</feature>
<feature type="transmembrane region" description="Helical" evidence="1">
    <location>
        <begin position="152"/>
        <end position="172"/>
    </location>
</feature>
<feature type="transmembrane region" description="Helical" evidence="1">
    <location>
        <begin position="177"/>
        <end position="197"/>
    </location>
</feature>
<feature type="transmembrane region" description="Helical" evidence="1">
    <location>
        <begin position="207"/>
        <end position="227"/>
    </location>
</feature>
<feature type="transmembrane region" description="Helical" evidence="1">
    <location>
        <begin position="230"/>
        <end position="250"/>
    </location>
</feature>
<feature type="transmembrane region" description="Helical" evidence="1">
    <location>
        <begin position="268"/>
        <end position="288"/>
    </location>
</feature>
<feature type="transmembrane region" description="Helical" evidence="1">
    <location>
        <begin position="291"/>
        <end position="311"/>
    </location>
</feature>
<feature type="transmembrane region" description="Helical" evidence="1">
    <location>
        <begin position="324"/>
        <end position="344"/>
    </location>
</feature>
<feature type="transmembrane region" description="Helical" evidence="1">
    <location>
        <begin position="356"/>
        <end position="376"/>
    </location>
</feature>
<feature type="domain" description="RCK N-terminal" evidence="2">
    <location>
        <begin position="400"/>
        <end position="519"/>
    </location>
</feature>
<comment type="function">
    <text evidence="1">Pore-forming subunit of a potassium efflux system that confers protection against electrophiles. Catalyzes K(+)/H(+) antiport.</text>
</comment>
<comment type="subunit">
    <text evidence="1">Interacts with the regulatory subunit KefG.</text>
</comment>
<comment type="subcellular location">
    <subcellularLocation>
        <location evidence="1">Cell inner membrane</location>
        <topology evidence="1">Multi-pass membrane protein</topology>
    </subcellularLocation>
</comment>
<comment type="similarity">
    <text evidence="1">Belongs to the monovalent cation:proton antiporter 2 (CPA2) transporter (TC 2.A.37) family. KefB subfamily.</text>
</comment>
<proteinExistence type="inferred from homology"/>
<reference key="1">
    <citation type="journal article" date="2009" name="PLoS Genet.">
        <title>Organised genome dynamics in the Escherichia coli species results in highly diverse adaptive paths.</title>
        <authorList>
            <person name="Touchon M."/>
            <person name="Hoede C."/>
            <person name="Tenaillon O."/>
            <person name="Barbe V."/>
            <person name="Baeriswyl S."/>
            <person name="Bidet P."/>
            <person name="Bingen E."/>
            <person name="Bonacorsi S."/>
            <person name="Bouchier C."/>
            <person name="Bouvet O."/>
            <person name="Calteau A."/>
            <person name="Chiapello H."/>
            <person name="Clermont O."/>
            <person name="Cruveiller S."/>
            <person name="Danchin A."/>
            <person name="Diard M."/>
            <person name="Dossat C."/>
            <person name="Karoui M.E."/>
            <person name="Frapy E."/>
            <person name="Garry L."/>
            <person name="Ghigo J.M."/>
            <person name="Gilles A.M."/>
            <person name="Johnson J."/>
            <person name="Le Bouguenec C."/>
            <person name="Lescat M."/>
            <person name="Mangenot S."/>
            <person name="Martinez-Jehanne V."/>
            <person name="Matic I."/>
            <person name="Nassif X."/>
            <person name="Oztas S."/>
            <person name="Petit M.A."/>
            <person name="Pichon C."/>
            <person name="Rouy Z."/>
            <person name="Ruf C.S."/>
            <person name="Schneider D."/>
            <person name="Tourret J."/>
            <person name="Vacherie B."/>
            <person name="Vallenet D."/>
            <person name="Medigue C."/>
            <person name="Rocha E.P.C."/>
            <person name="Denamur E."/>
        </authorList>
    </citation>
    <scope>NUCLEOTIDE SEQUENCE [LARGE SCALE GENOMIC DNA]</scope>
    <source>
        <strain>UMN026 / ExPEC</strain>
    </source>
</reference>
<evidence type="ECO:0000255" key="1">
    <source>
        <dbReference type="HAMAP-Rule" id="MF_01412"/>
    </source>
</evidence>
<evidence type="ECO:0000255" key="2">
    <source>
        <dbReference type="PROSITE-ProRule" id="PRU00543"/>
    </source>
</evidence>
<accession>B7NDV9</accession>
<sequence length="601" mass="66395">MEGSDFLLAGVLFLFAAVAAVPLASRLGIGAVLGYLLAGIAIGPWGLGFISDVDEILHFSELGVVFLMFIIGLELNPSKLWQLRRSIFGVGAAQVLLSAALLAGLLMLTDFAWQAAVVGGIGLAMSSTAMALQLMRDKGMNRSESGQLGFSVLLFQDLAVIPALALVPLLAGSADEHFDWMKIGMKVLAFVGMLIGGRYLLRPVFRFIAASGVREVFTAATLLLVLGSALFMDALGLSMALGTFIAGVLLAESEYRHELETAIDPFKGLLLGLFFISVGMSLNLGVLYTHLLWVVIAVVVLVAVKILVLYLLARLYGVRSSERMQFAGVLSQGGEFAFVLFSTASSQRLFQGDQMALLLVTVTLSMMTTPLLMKLVDKWLSRQFNGPEEEDEKPWVNDDKPQVIVVGFGRFGQVIGRLLMANKMRITVLERDISAVNLMRKYGYKVYYGDATQVDLLRSAGAEAAESIVITCNEPEDTMKLVEICQQHFPHLHILARARGRVEAHELLQAGVTQFSRETFSSALELGRKTLVTLGMHPHQAQRAQLHFRRLDMRMLRELIPMHADTVQISRAREARRELEEIFQREMQQERRQLDGWDEFE</sequence>
<name>KEFB_ECOLU</name>
<protein>
    <recommendedName>
        <fullName evidence="1">Glutathione-regulated potassium-efflux system protein KefB</fullName>
    </recommendedName>
    <alternativeName>
        <fullName evidence="1">K(+)/H(+) antiporter</fullName>
    </alternativeName>
</protein>
<organism>
    <name type="scientific">Escherichia coli O17:K52:H18 (strain UMN026 / ExPEC)</name>
    <dbReference type="NCBI Taxonomy" id="585056"/>
    <lineage>
        <taxon>Bacteria</taxon>
        <taxon>Pseudomonadati</taxon>
        <taxon>Pseudomonadota</taxon>
        <taxon>Gammaproteobacteria</taxon>
        <taxon>Enterobacterales</taxon>
        <taxon>Enterobacteriaceae</taxon>
        <taxon>Escherichia</taxon>
    </lineage>
</organism>
<dbReference type="EMBL" id="CU928163">
    <property type="protein sequence ID" value="CAR14959.1"/>
    <property type="molecule type" value="Genomic_DNA"/>
</dbReference>
<dbReference type="RefSeq" id="WP_000399099.1">
    <property type="nucleotide sequence ID" value="NC_011751.1"/>
</dbReference>
<dbReference type="RefSeq" id="YP_002414464.1">
    <property type="nucleotide sequence ID" value="NC_011751.1"/>
</dbReference>
<dbReference type="SMR" id="B7NDV9"/>
<dbReference type="STRING" id="585056.ECUMN_3811"/>
<dbReference type="KEGG" id="eum:ECUMN_3811"/>
<dbReference type="PATRIC" id="fig|585056.7.peg.3985"/>
<dbReference type="HOGENOM" id="CLU_005126_9_3_6"/>
<dbReference type="Proteomes" id="UP000007097">
    <property type="component" value="Chromosome"/>
</dbReference>
<dbReference type="GO" id="GO:0005886">
    <property type="term" value="C:plasma membrane"/>
    <property type="evidence" value="ECO:0007669"/>
    <property type="project" value="UniProtKB-SubCell"/>
</dbReference>
<dbReference type="GO" id="GO:0015503">
    <property type="term" value="F:glutathione-regulated potassium exporter activity"/>
    <property type="evidence" value="ECO:0007669"/>
    <property type="project" value="UniProtKB-UniRule"/>
</dbReference>
<dbReference type="GO" id="GO:1902600">
    <property type="term" value="P:proton transmembrane transport"/>
    <property type="evidence" value="ECO:0007669"/>
    <property type="project" value="InterPro"/>
</dbReference>
<dbReference type="FunFam" id="1.20.1530.20:FF:000001">
    <property type="entry name" value="Glutathione-regulated potassium-efflux system protein KefB"/>
    <property type="match status" value="1"/>
</dbReference>
<dbReference type="FunFam" id="3.40.50.720:FF:000036">
    <property type="entry name" value="Glutathione-regulated potassium-efflux system protein KefB"/>
    <property type="match status" value="1"/>
</dbReference>
<dbReference type="Gene3D" id="1.20.1530.20">
    <property type="match status" value="1"/>
</dbReference>
<dbReference type="Gene3D" id="3.40.50.720">
    <property type="entry name" value="NAD(P)-binding Rossmann-like Domain"/>
    <property type="match status" value="1"/>
</dbReference>
<dbReference type="HAMAP" id="MF_01412">
    <property type="entry name" value="K_H_efflux_KefB"/>
    <property type="match status" value="1"/>
</dbReference>
<dbReference type="InterPro" id="IPR006153">
    <property type="entry name" value="Cation/H_exchanger_TM"/>
</dbReference>
<dbReference type="InterPro" id="IPR004771">
    <property type="entry name" value="K/H_exchanger"/>
</dbReference>
<dbReference type="InterPro" id="IPR020884">
    <property type="entry name" value="K_H_efflux_KefB"/>
</dbReference>
<dbReference type="InterPro" id="IPR038770">
    <property type="entry name" value="Na+/solute_symporter_sf"/>
</dbReference>
<dbReference type="InterPro" id="IPR036291">
    <property type="entry name" value="NAD(P)-bd_dom_sf"/>
</dbReference>
<dbReference type="InterPro" id="IPR003148">
    <property type="entry name" value="RCK_N"/>
</dbReference>
<dbReference type="NCBIfam" id="TIGR00932">
    <property type="entry name" value="2a37"/>
    <property type="match status" value="1"/>
</dbReference>
<dbReference type="NCBIfam" id="NF002973">
    <property type="entry name" value="PRK03659.1"/>
    <property type="match status" value="1"/>
</dbReference>
<dbReference type="PANTHER" id="PTHR46157">
    <property type="entry name" value="K(+) EFFLUX ANTIPORTER 3, CHLOROPLASTIC"/>
    <property type="match status" value="1"/>
</dbReference>
<dbReference type="PANTHER" id="PTHR46157:SF4">
    <property type="entry name" value="K(+) EFFLUX ANTIPORTER 3, CHLOROPLASTIC"/>
    <property type="match status" value="1"/>
</dbReference>
<dbReference type="Pfam" id="PF00999">
    <property type="entry name" value="Na_H_Exchanger"/>
    <property type="match status" value="1"/>
</dbReference>
<dbReference type="Pfam" id="PF02254">
    <property type="entry name" value="TrkA_N"/>
    <property type="match status" value="1"/>
</dbReference>
<dbReference type="SUPFAM" id="SSF51735">
    <property type="entry name" value="NAD(P)-binding Rossmann-fold domains"/>
    <property type="match status" value="1"/>
</dbReference>
<dbReference type="PROSITE" id="PS51201">
    <property type="entry name" value="RCK_N"/>
    <property type="match status" value="1"/>
</dbReference>